<organism>
    <name type="scientific">Nostoc sp. (strain PCC 7120 / SAG 25.82 / UTEX 2576)</name>
    <dbReference type="NCBI Taxonomy" id="103690"/>
    <lineage>
        <taxon>Bacteria</taxon>
        <taxon>Bacillati</taxon>
        <taxon>Cyanobacteriota</taxon>
        <taxon>Cyanophyceae</taxon>
        <taxon>Nostocales</taxon>
        <taxon>Nostocaceae</taxon>
        <taxon>Nostoc</taxon>
    </lineage>
</organism>
<proteinExistence type="inferred from homology"/>
<feature type="chain" id="PRO_0000216622" description="Photosystem II reaction center protein J">
    <location>
        <begin position="1"/>
        <end position="40"/>
    </location>
</feature>
<feature type="transmembrane region" description="Helical" evidence="1">
    <location>
        <begin position="8"/>
        <end position="28"/>
    </location>
</feature>
<keyword id="KW-0472">Membrane</keyword>
<keyword id="KW-0602">Photosynthesis</keyword>
<keyword id="KW-0604">Photosystem II</keyword>
<keyword id="KW-0674">Reaction center</keyword>
<keyword id="KW-1185">Reference proteome</keyword>
<keyword id="KW-0793">Thylakoid</keyword>
<keyword id="KW-0812">Transmembrane</keyword>
<keyword id="KW-1133">Transmembrane helix</keyword>
<dbReference type="EMBL" id="BA000019">
    <property type="protein sequence ID" value="BAB75547.1"/>
    <property type="molecule type" value="Genomic_DNA"/>
</dbReference>
<dbReference type="PIR" id="AI2286">
    <property type="entry name" value="AI2286"/>
</dbReference>
<dbReference type="SMR" id="Q8YQH9"/>
<dbReference type="STRING" id="103690.gene:10495890"/>
<dbReference type="KEGG" id="ana:asr3848"/>
<dbReference type="eggNOG" id="ENOG5033ABP">
    <property type="taxonomic scope" value="Bacteria"/>
</dbReference>
<dbReference type="OrthoDB" id="466474at2"/>
<dbReference type="Proteomes" id="UP000002483">
    <property type="component" value="Chromosome"/>
</dbReference>
<dbReference type="GO" id="GO:0009539">
    <property type="term" value="C:photosystem II reaction center"/>
    <property type="evidence" value="ECO:0007669"/>
    <property type="project" value="InterPro"/>
</dbReference>
<dbReference type="GO" id="GO:0031676">
    <property type="term" value="C:plasma membrane-derived thylakoid membrane"/>
    <property type="evidence" value="ECO:0007669"/>
    <property type="project" value="UniProtKB-SubCell"/>
</dbReference>
<dbReference type="GO" id="GO:0015979">
    <property type="term" value="P:photosynthesis"/>
    <property type="evidence" value="ECO:0007669"/>
    <property type="project" value="UniProtKB-UniRule"/>
</dbReference>
<dbReference type="Gene3D" id="6.10.250.2070">
    <property type="match status" value="1"/>
</dbReference>
<dbReference type="HAMAP" id="MF_01305">
    <property type="entry name" value="PSII_PsbJ"/>
    <property type="match status" value="1"/>
</dbReference>
<dbReference type="InterPro" id="IPR002682">
    <property type="entry name" value="PSII_PsbJ"/>
</dbReference>
<dbReference type="InterPro" id="IPR037267">
    <property type="entry name" value="PSII_PsbJ_sf"/>
</dbReference>
<dbReference type="NCBIfam" id="NF002722">
    <property type="entry name" value="PRK02565.1"/>
    <property type="match status" value="1"/>
</dbReference>
<dbReference type="PANTHER" id="PTHR34812">
    <property type="entry name" value="PHOTOSYSTEM II REACTION CENTER PROTEIN J"/>
    <property type="match status" value="1"/>
</dbReference>
<dbReference type="PANTHER" id="PTHR34812:SF3">
    <property type="entry name" value="PHOTOSYSTEM II REACTION CENTER PROTEIN J"/>
    <property type="match status" value="1"/>
</dbReference>
<dbReference type="Pfam" id="PF01788">
    <property type="entry name" value="PsbJ"/>
    <property type="match status" value="1"/>
</dbReference>
<dbReference type="SUPFAM" id="SSF161021">
    <property type="entry name" value="Photosystem II reaction center protein J, PsbJ"/>
    <property type="match status" value="1"/>
</dbReference>
<name>PSBJ_NOSS1</name>
<comment type="function">
    <text evidence="1">One of the components of the core complex of photosystem II (PSII). PSII is a light-driven water:plastoquinone oxidoreductase that uses light energy to abstract electrons from H(2)O, generating O(2) and a proton gradient subsequently used for ATP formation. It consists of a core antenna complex that captures photons, and an electron transfer chain that converts photonic excitation into a charge separation.</text>
</comment>
<comment type="subunit">
    <text evidence="1">PSII is composed of 1 copy each of membrane proteins PsbA, PsbB, PsbC, PsbD, PsbE, PsbF, PsbH, PsbI, PsbJ, PsbK, PsbL, PsbM, PsbT, PsbX, PsbY, PsbZ, Psb30/Ycf12, peripheral proteins PsbO, CyanoQ (PsbQ), PsbU, PsbV and a large number of cofactors. It forms dimeric complexes.</text>
</comment>
<comment type="subcellular location">
    <subcellularLocation>
        <location evidence="1">Cellular thylakoid membrane</location>
        <topology evidence="1">Single-pass membrane protein</topology>
    </subcellularLocation>
</comment>
<comment type="similarity">
    <text evidence="1">Belongs to the PsbJ family.</text>
</comment>
<sequence>MSAGSGRIPLWVVATIAGLGVITVVGIFFYGAYAGIGSSI</sequence>
<gene>
    <name evidence="1" type="primary">psbJ</name>
    <name type="ordered locus">asr3848</name>
</gene>
<protein>
    <recommendedName>
        <fullName evidence="1">Photosystem II reaction center protein J</fullName>
        <shortName evidence="1">PSII-J</shortName>
    </recommendedName>
</protein>
<evidence type="ECO:0000255" key="1">
    <source>
        <dbReference type="HAMAP-Rule" id="MF_01305"/>
    </source>
</evidence>
<reference key="1">
    <citation type="journal article" date="2001" name="DNA Res.">
        <title>Complete genomic sequence of the filamentous nitrogen-fixing cyanobacterium Anabaena sp. strain PCC 7120.</title>
        <authorList>
            <person name="Kaneko T."/>
            <person name="Nakamura Y."/>
            <person name="Wolk C.P."/>
            <person name="Kuritz T."/>
            <person name="Sasamoto S."/>
            <person name="Watanabe A."/>
            <person name="Iriguchi M."/>
            <person name="Ishikawa A."/>
            <person name="Kawashima K."/>
            <person name="Kimura T."/>
            <person name="Kishida Y."/>
            <person name="Kohara M."/>
            <person name="Matsumoto M."/>
            <person name="Matsuno A."/>
            <person name="Muraki A."/>
            <person name="Nakazaki N."/>
            <person name="Shimpo S."/>
            <person name="Sugimoto M."/>
            <person name="Takazawa M."/>
            <person name="Yamada M."/>
            <person name="Yasuda M."/>
            <person name="Tabata S."/>
        </authorList>
    </citation>
    <scope>NUCLEOTIDE SEQUENCE [LARGE SCALE GENOMIC DNA]</scope>
    <source>
        <strain>PCC 7120 / SAG 25.82 / UTEX 2576</strain>
    </source>
</reference>
<accession>Q8YQH9</accession>